<feature type="chain" id="PRO_0000390606" description="Prokaryotic ubiquitin-like protein Pup">
    <location>
        <begin position="1"/>
        <end position="64"/>
    </location>
</feature>
<feature type="region of interest" description="Disordered" evidence="2">
    <location>
        <begin position="1"/>
        <end position="37"/>
    </location>
</feature>
<feature type="region of interest" description="ARC ATPase binding" evidence="1">
    <location>
        <begin position="21"/>
        <end position="58"/>
    </location>
</feature>
<feature type="coiled-coil region" evidence="1">
    <location>
        <begin position="24"/>
        <end position="52"/>
    </location>
</feature>
<feature type="modified residue" description="Deamidated glutamine" evidence="1">
    <location>
        <position position="64"/>
    </location>
</feature>
<feature type="cross-link" description="Isoglutamyl lysine isopeptide (Gln-Lys) (interchain with K-? in acceptor proteins)" evidence="1">
    <location>
        <position position="64"/>
    </location>
</feature>
<accession>C0ZZU8</accession>
<evidence type="ECO:0000255" key="1">
    <source>
        <dbReference type="HAMAP-Rule" id="MF_02106"/>
    </source>
</evidence>
<evidence type="ECO:0000256" key="2">
    <source>
        <dbReference type="SAM" id="MobiDB-lite"/>
    </source>
</evidence>
<gene>
    <name evidence="1" type="primary">pup</name>
    <name type="ordered locus">RER_31750</name>
</gene>
<sequence length="64" mass="6916">MAQEQTQRAGGGEDDETTGGDGSAGQERREKLAAETDDLLDEIDDVLEENAEDFVRAYVQKGGQ</sequence>
<name>PUP_RHOE4</name>
<protein>
    <recommendedName>
        <fullName evidence="1">Prokaryotic ubiquitin-like protein Pup</fullName>
    </recommendedName>
    <alternativeName>
        <fullName evidence="1">Bacterial ubiquitin-like modifier</fullName>
    </alternativeName>
</protein>
<comment type="function">
    <text evidence="1">Protein modifier that is covalently attached to lysine residues of substrate proteins, thereby targeting them for proteasomal degradation. The tagging system is termed pupylation.</text>
</comment>
<comment type="pathway">
    <text evidence="1">Protein degradation; proteasomal Pup-dependent pathway.</text>
</comment>
<comment type="subunit">
    <text evidence="1">Strongly interacts with the proteasome-associated ATPase ARC through a hydrophobic interface; the interacting region of Pup lies in its C-terminal half. There is one Pup binding site per ARC hexamer ring.</text>
</comment>
<comment type="domain">
    <text evidence="1">The N-terminal unstructured half of Pup provides a signal required to initiate unfolding and degradation by the proteasome but is not needed for pupylation, while the C-terminal helical half of Pup interacts with ARC to target proteins to the proteasome.</text>
</comment>
<comment type="PTM">
    <text evidence="1">Is modified by deamidation of its C-terminal glutamine to glutamate by the deamidase Dop, a prerequisite to the subsequent pupylation process.</text>
</comment>
<comment type="similarity">
    <text evidence="1">Belongs to the prokaryotic ubiquitin-like protein family.</text>
</comment>
<dbReference type="EMBL" id="AP008957">
    <property type="protein sequence ID" value="BAH33883.1"/>
    <property type="molecule type" value="Genomic_DNA"/>
</dbReference>
<dbReference type="RefSeq" id="WP_003944925.1">
    <property type="nucleotide sequence ID" value="NC_012490.1"/>
</dbReference>
<dbReference type="SMR" id="C0ZZU8"/>
<dbReference type="KEGG" id="rer:RER_31750"/>
<dbReference type="eggNOG" id="ENOG50333JS">
    <property type="taxonomic scope" value="Bacteria"/>
</dbReference>
<dbReference type="HOGENOM" id="CLU_183816_1_0_11"/>
<dbReference type="UniPathway" id="UPA00997"/>
<dbReference type="Proteomes" id="UP000002204">
    <property type="component" value="Chromosome"/>
</dbReference>
<dbReference type="GO" id="GO:0070628">
    <property type="term" value="F:proteasome binding"/>
    <property type="evidence" value="ECO:0007669"/>
    <property type="project" value="UniProtKB-UniRule"/>
</dbReference>
<dbReference type="GO" id="GO:0031386">
    <property type="term" value="F:protein tag activity"/>
    <property type="evidence" value="ECO:0007669"/>
    <property type="project" value="UniProtKB-UniRule"/>
</dbReference>
<dbReference type="GO" id="GO:0019941">
    <property type="term" value="P:modification-dependent protein catabolic process"/>
    <property type="evidence" value="ECO:0007669"/>
    <property type="project" value="UniProtKB-UniRule"/>
</dbReference>
<dbReference type="GO" id="GO:0010498">
    <property type="term" value="P:proteasomal protein catabolic process"/>
    <property type="evidence" value="ECO:0007669"/>
    <property type="project" value="UniProtKB-UniRule"/>
</dbReference>
<dbReference type="GO" id="GO:0070490">
    <property type="term" value="P:protein pupylation"/>
    <property type="evidence" value="ECO:0007669"/>
    <property type="project" value="UniProtKB-UniRule"/>
</dbReference>
<dbReference type="HAMAP" id="MF_02106">
    <property type="entry name" value="Pup"/>
    <property type="match status" value="1"/>
</dbReference>
<dbReference type="InterPro" id="IPR008515">
    <property type="entry name" value="Ubiquitin-like_Pup"/>
</dbReference>
<dbReference type="NCBIfam" id="TIGR03687">
    <property type="entry name" value="pupylate_cterm"/>
    <property type="match status" value="1"/>
</dbReference>
<dbReference type="Pfam" id="PF05639">
    <property type="entry name" value="Pup"/>
    <property type="match status" value="1"/>
</dbReference>
<proteinExistence type="inferred from homology"/>
<organism>
    <name type="scientific">Rhodococcus erythropolis (strain PR4 / NBRC 100887)</name>
    <dbReference type="NCBI Taxonomy" id="234621"/>
    <lineage>
        <taxon>Bacteria</taxon>
        <taxon>Bacillati</taxon>
        <taxon>Actinomycetota</taxon>
        <taxon>Actinomycetes</taxon>
        <taxon>Mycobacteriales</taxon>
        <taxon>Nocardiaceae</taxon>
        <taxon>Rhodococcus</taxon>
        <taxon>Rhodococcus erythropolis group</taxon>
    </lineage>
</organism>
<keyword id="KW-0175">Coiled coil</keyword>
<keyword id="KW-1017">Isopeptide bond</keyword>
<keyword id="KW-0833">Ubl conjugation pathway</keyword>
<reference key="1">
    <citation type="submission" date="2005-03" db="EMBL/GenBank/DDBJ databases">
        <title>Comparison of the complete genome sequences of Rhodococcus erythropolis PR4 and Rhodococcus opacus B4.</title>
        <authorList>
            <person name="Takarada H."/>
            <person name="Sekine M."/>
            <person name="Hosoyama A."/>
            <person name="Yamada R."/>
            <person name="Fujisawa T."/>
            <person name="Omata S."/>
            <person name="Shimizu A."/>
            <person name="Tsukatani N."/>
            <person name="Tanikawa S."/>
            <person name="Fujita N."/>
            <person name="Harayama S."/>
        </authorList>
    </citation>
    <scope>NUCLEOTIDE SEQUENCE [LARGE SCALE GENOMIC DNA]</scope>
    <source>
        <strain>PR4 / NBRC 100887</strain>
    </source>
</reference>